<dbReference type="EMBL" id="CP001657">
    <property type="protein sequence ID" value="ACT14370.1"/>
    <property type="molecule type" value="Genomic_DNA"/>
</dbReference>
<dbReference type="RefSeq" id="WP_015841500.1">
    <property type="nucleotide sequence ID" value="NC_012917.1"/>
</dbReference>
<dbReference type="SMR" id="C6DDG3"/>
<dbReference type="STRING" id="561230.PC1_3354"/>
<dbReference type="KEGG" id="pct:PC1_3354"/>
<dbReference type="eggNOG" id="COG2919">
    <property type="taxonomic scope" value="Bacteria"/>
</dbReference>
<dbReference type="HOGENOM" id="CLU_134863_5_2_6"/>
<dbReference type="OrthoDB" id="7061211at2"/>
<dbReference type="Proteomes" id="UP000002736">
    <property type="component" value="Chromosome"/>
</dbReference>
<dbReference type="GO" id="GO:0032153">
    <property type="term" value="C:cell division site"/>
    <property type="evidence" value="ECO:0007669"/>
    <property type="project" value="UniProtKB-UniRule"/>
</dbReference>
<dbReference type="GO" id="GO:0030428">
    <property type="term" value="C:cell septum"/>
    <property type="evidence" value="ECO:0007669"/>
    <property type="project" value="TreeGrafter"/>
</dbReference>
<dbReference type="GO" id="GO:0005886">
    <property type="term" value="C:plasma membrane"/>
    <property type="evidence" value="ECO:0007669"/>
    <property type="project" value="UniProtKB-SubCell"/>
</dbReference>
<dbReference type="GO" id="GO:0043093">
    <property type="term" value="P:FtsZ-dependent cytokinesis"/>
    <property type="evidence" value="ECO:0007669"/>
    <property type="project" value="UniProtKB-UniRule"/>
</dbReference>
<dbReference type="Gene3D" id="1.20.5.400">
    <property type="match status" value="1"/>
</dbReference>
<dbReference type="HAMAP" id="MF_00599">
    <property type="entry name" value="FtsB"/>
    <property type="match status" value="1"/>
</dbReference>
<dbReference type="InterPro" id="IPR023081">
    <property type="entry name" value="Cell_div_FtsB"/>
</dbReference>
<dbReference type="InterPro" id="IPR007060">
    <property type="entry name" value="FtsL/DivIC"/>
</dbReference>
<dbReference type="NCBIfam" id="NF002058">
    <property type="entry name" value="PRK00888.1"/>
    <property type="match status" value="1"/>
</dbReference>
<dbReference type="PANTHER" id="PTHR37485">
    <property type="entry name" value="CELL DIVISION PROTEIN FTSB"/>
    <property type="match status" value="1"/>
</dbReference>
<dbReference type="PANTHER" id="PTHR37485:SF1">
    <property type="entry name" value="CELL DIVISION PROTEIN FTSB"/>
    <property type="match status" value="1"/>
</dbReference>
<dbReference type="Pfam" id="PF04977">
    <property type="entry name" value="DivIC"/>
    <property type="match status" value="1"/>
</dbReference>
<evidence type="ECO:0000255" key="1">
    <source>
        <dbReference type="HAMAP-Rule" id="MF_00599"/>
    </source>
</evidence>
<evidence type="ECO:0000256" key="2">
    <source>
        <dbReference type="SAM" id="MobiDB-lite"/>
    </source>
</evidence>
<reference key="1">
    <citation type="submission" date="2009-07" db="EMBL/GenBank/DDBJ databases">
        <title>Complete sequence of Pectobacterium carotovorum subsp. carotovorum PC1.</title>
        <authorList>
            <consortium name="US DOE Joint Genome Institute"/>
            <person name="Lucas S."/>
            <person name="Copeland A."/>
            <person name="Lapidus A."/>
            <person name="Glavina del Rio T."/>
            <person name="Tice H."/>
            <person name="Bruce D."/>
            <person name="Goodwin L."/>
            <person name="Pitluck S."/>
            <person name="Munk A.C."/>
            <person name="Brettin T."/>
            <person name="Detter J.C."/>
            <person name="Han C."/>
            <person name="Tapia R."/>
            <person name="Larimer F."/>
            <person name="Land M."/>
            <person name="Hauser L."/>
            <person name="Kyrpides N."/>
            <person name="Mikhailova N."/>
            <person name="Balakrishnan V."/>
            <person name="Glasner J."/>
            <person name="Perna N.T."/>
        </authorList>
    </citation>
    <scope>NUCLEOTIDE SEQUENCE [LARGE SCALE GENOMIC DNA]</scope>
    <source>
        <strain>PC1</strain>
    </source>
</reference>
<organism>
    <name type="scientific">Pectobacterium carotovorum subsp. carotovorum (strain PC1)</name>
    <dbReference type="NCBI Taxonomy" id="561230"/>
    <lineage>
        <taxon>Bacteria</taxon>
        <taxon>Pseudomonadati</taxon>
        <taxon>Pseudomonadota</taxon>
        <taxon>Gammaproteobacteria</taxon>
        <taxon>Enterobacterales</taxon>
        <taxon>Pectobacteriaceae</taxon>
        <taxon>Pectobacterium</taxon>
    </lineage>
</organism>
<gene>
    <name evidence="1" type="primary">ftsB</name>
    <name type="ordered locus">PC1_3354</name>
</gene>
<comment type="function">
    <text evidence="1">Essential cell division protein. May link together the upstream cell division proteins, which are predominantly cytoplasmic, with the downstream cell division proteins, which are predominantly periplasmic.</text>
</comment>
<comment type="subunit">
    <text evidence="1">Part of a complex composed of FtsB, FtsL and FtsQ.</text>
</comment>
<comment type="subcellular location">
    <subcellularLocation>
        <location evidence="1">Cell inner membrane</location>
        <topology evidence="1">Single-pass type II membrane protein</topology>
    </subcellularLocation>
    <text evidence="1">Localizes to the division septum.</text>
</comment>
<comment type="similarity">
    <text evidence="1">Belongs to the FtsB family.</text>
</comment>
<name>FTSB_PECCP</name>
<sequence>MGKLTLLLLILLGWLQYSLWLGKNGIHDYVRVKDDVVVQQGNNAKLKDRNEQLFAEIDDLNGGQEAIEERARNELGMIKPGESFYRLVPESNHRNANTAPSTNTPSNNIQR</sequence>
<keyword id="KW-0131">Cell cycle</keyword>
<keyword id="KW-0132">Cell division</keyword>
<keyword id="KW-0997">Cell inner membrane</keyword>
<keyword id="KW-1003">Cell membrane</keyword>
<keyword id="KW-0175">Coiled coil</keyword>
<keyword id="KW-0472">Membrane</keyword>
<keyword id="KW-0812">Transmembrane</keyword>
<keyword id="KW-1133">Transmembrane helix</keyword>
<accession>C6DDG3</accession>
<protein>
    <recommendedName>
        <fullName evidence="1">Cell division protein FtsB</fullName>
    </recommendedName>
</protein>
<feature type="chain" id="PRO_1000212188" description="Cell division protein FtsB">
    <location>
        <begin position="1"/>
        <end position="111"/>
    </location>
</feature>
<feature type="topological domain" description="Cytoplasmic" evidence="1">
    <location>
        <begin position="1"/>
        <end position="3"/>
    </location>
</feature>
<feature type="transmembrane region" description="Helical" evidence="1">
    <location>
        <begin position="4"/>
        <end position="21"/>
    </location>
</feature>
<feature type="topological domain" description="Periplasmic" evidence="1">
    <location>
        <begin position="22"/>
        <end position="111"/>
    </location>
</feature>
<feature type="region of interest" description="Disordered" evidence="2">
    <location>
        <begin position="90"/>
        <end position="111"/>
    </location>
</feature>
<feature type="coiled-coil region" evidence="1">
    <location>
        <begin position="33"/>
        <end position="63"/>
    </location>
</feature>
<feature type="compositionally biased region" description="Low complexity" evidence="2">
    <location>
        <begin position="95"/>
        <end position="111"/>
    </location>
</feature>
<proteinExistence type="inferred from homology"/>